<proteinExistence type="inferred from homology"/>
<evidence type="ECO:0000255" key="1">
    <source>
        <dbReference type="HAMAP-Rule" id="MF_01430"/>
    </source>
</evidence>
<evidence type="ECO:0000255" key="2">
    <source>
        <dbReference type="PROSITE-ProRule" id="PRU01115"/>
    </source>
</evidence>
<comment type="function">
    <text evidence="1">Part of the outer membrane protein assembly complex, which is involved in assembly and insertion of beta-barrel proteins into the outer membrane. Constitutes, with BamD, the core component of the assembly machinery.</text>
</comment>
<comment type="subunit">
    <text evidence="1">Part of the Bam complex, which is composed of the outer membrane protein BamA, and four lipoproteins BamB, BamC, BamD and BamE.</text>
</comment>
<comment type="subcellular location">
    <subcellularLocation>
        <location evidence="1">Cell outer membrane</location>
    </subcellularLocation>
</comment>
<comment type="similarity">
    <text evidence="1">Belongs to the BamA family.</text>
</comment>
<name>BAMA_ECOLC</name>
<gene>
    <name evidence="1" type="primary">bamA</name>
    <name type="synonym">yaeT</name>
    <name type="ordered locus">EcolC_3483</name>
</gene>
<organism>
    <name type="scientific">Escherichia coli (strain ATCC 8739 / DSM 1576 / NBRC 3972 / NCIMB 8545 / WDCM 00012 / Crooks)</name>
    <dbReference type="NCBI Taxonomy" id="481805"/>
    <lineage>
        <taxon>Bacteria</taxon>
        <taxon>Pseudomonadati</taxon>
        <taxon>Pseudomonadota</taxon>
        <taxon>Gammaproteobacteria</taxon>
        <taxon>Enterobacterales</taxon>
        <taxon>Enterobacteriaceae</taxon>
        <taxon>Escherichia</taxon>
    </lineage>
</organism>
<feature type="signal peptide" evidence="1">
    <location>
        <begin position="1"/>
        <end position="20"/>
    </location>
</feature>
<feature type="chain" id="PRO_5000313753" description="Outer membrane protein assembly factor BamA">
    <location>
        <begin position="21"/>
        <end position="810"/>
    </location>
</feature>
<feature type="domain" description="POTRA 1" evidence="2">
    <location>
        <begin position="24"/>
        <end position="91"/>
    </location>
</feature>
<feature type="domain" description="POTRA 2" evidence="2">
    <location>
        <begin position="92"/>
        <end position="172"/>
    </location>
</feature>
<feature type="domain" description="POTRA 3" evidence="2">
    <location>
        <begin position="175"/>
        <end position="263"/>
    </location>
</feature>
<feature type="domain" description="POTRA 4" evidence="2">
    <location>
        <begin position="266"/>
        <end position="344"/>
    </location>
</feature>
<feature type="domain" description="POTRA 5" evidence="2">
    <location>
        <begin position="347"/>
        <end position="421"/>
    </location>
</feature>
<sequence>MAMKKLLIASLLFSSATVYGAEGFVVKDIHFEGLQRVAVGAALLSMPVRTGDTVNDEDISNTIRALFATGNFEDVRVLRDGDTLLVQVKERPTIASITFSGNKSVKDDMLKQNLEASGVRVGESLDRTTIADIEKGLEDFYYSVGKYSASVKAVVTPLPRNRVDLKLVFQEGVSAEIQQINIVGNHAFTTDELISHFQLRDEVPWWNVVGDRKYQKQKLAGDLETLRSYYLDRGYARFNIDSTQVSLTPDKKGIYVTVNITEGDQYKLSGVEVSGNLAGHSAEIEQLTKIEPGELYNGTKVTKMEDDIKKLLGRYGYAYPRVQSMPEINDADKTVKLRVNVDAGNRFYVRKIRFEGNDTSKDAVLRREMRQMEGAWLGSDLVDQGKERLNRLGFFETVDTDTQRVPGSPDQVDVVYKVKERNTGSFNFGIGYGTESGVSFQAGVQQDNWLGTGYAVGINGTKNDYQTYAELSVTNPYFTVDGVSLGGRLFYNDFQADDADLSDYTNKSYGTDVTLGFPINEYNSLRAGLGYVHNSLSNMQPQVAMWRYLYSMGEHPSTSDQDNSFKTDDFTFNYGWTYNKLDRGYFPTDGSRVNLTGKVTIPGSDNEYYKVTLDTATYVPIDDDHKWVVLGRTRWGYGDGLGGKEMPFYENFYAGGSSTVRGFQSNTIGPKAVYFPHQASNYDPDYDYECATQDGAKDLCKSDDAVGGNAMAVASLEFITPTPFISDKYANSVRTSFFWDMGTVWDTNWDSSQYSGYPDYSDPSNIRMSAGIALQWMSPLGPLVFSYAQPFKKYDGDKAEQFQFNIGKTW</sequence>
<reference key="1">
    <citation type="submission" date="2008-02" db="EMBL/GenBank/DDBJ databases">
        <title>Complete sequence of Escherichia coli C str. ATCC 8739.</title>
        <authorList>
            <person name="Copeland A."/>
            <person name="Lucas S."/>
            <person name="Lapidus A."/>
            <person name="Glavina del Rio T."/>
            <person name="Dalin E."/>
            <person name="Tice H."/>
            <person name="Bruce D."/>
            <person name="Goodwin L."/>
            <person name="Pitluck S."/>
            <person name="Kiss H."/>
            <person name="Brettin T."/>
            <person name="Detter J.C."/>
            <person name="Han C."/>
            <person name="Kuske C.R."/>
            <person name="Schmutz J."/>
            <person name="Larimer F."/>
            <person name="Land M."/>
            <person name="Hauser L."/>
            <person name="Kyrpides N."/>
            <person name="Mikhailova N."/>
            <person name="Ingram L."/>
            <person name="Richardson P."/>
        </authorList>
    </citation>
    <scope>NUCLEOTIDE SEQUENCE [LARGE SCALE GENOMIC DNA]</scope>
    <source>
        <strain>ATCC 8739 / DSM 1576 / NBRC 3972 / NCIMB 8545 / WDCM 00012 / Crooks</strain>
    </source>
</reference>
<keyword id="KW-0998">Cell outer membrane</keyword>
<keyword id="KW-0472">Membrane</keyword>
<keyword id="KW-0677">Repeat</keyword>
<keyword id="KW-0732">Signal</keyword>
<keyword id="KW-0812">Transmembrane</keyword>
<keyword id="KW-1134">Transmembrane beta strand</keyword>
<dbReference type="EMBL" id="CP000946">
    <property type="protein sequence ID" value="ACA79097.1"/>
    <property type="molecule type" value="Genomic_DNA"/>
</dbReference>
<dbReference type="RefSeq" id="WP_001240896.1">
    <property type="nucleotide sequence ID" value="NZ_MTFT01000035.1"/>
</dbReference>
<dbReference type="BMRB" id="B1IQG4"/>
<dbReference type="SMR" id="B1IQG4"/>
<dbReference type="GeneID" id="93777248"/>
<dbReference type="KEGG" id="ecl:EcolC_3483"/>
<dbReference type="HOGENOM" id="CLU_007664_1_0_6"/>
<dbReference type="GO" id="GO:1990063">
    <property type="term" value="C:Bam protein complex"/>
    <property type="evidence" value="ECO:0007669"/>
    <property type="project" value="TreeGrafter"/>
</dbReference>
<dbReference type="GO" id="GO:0043165">
    <property type="term" value="P:Gram-negative-bacterium-type cell outer membrane assembly"/>
    <property type="evidence" value="ECO:0007669"/>
    <property type="project" value="UniProtKB-UniRule"/>
</dbReference>
<dbReference type="GO" id="GO:0051205">
    <property type="term" value="P:protein insertion into membrane"/>
    <property type="evidence" value="ECO:0007669"/>
    <property type="project" value="UniProtKB-UniRule"/>
</dbReference>
<dbReference type="FunFam" id="2.40.160.50:FF:000001">
    <property type="entry name" value="Outer membrane protein assembly factor BamA"/>
    <property type="match status" value="1"/>
</dbReference>
<dbReference type="FunFam" id="3.10.20.310:FF:000001">
    <property type="entry name" value="Outer membrane protein assembly factor BamA"/>
    <property type="match status" value="1"/>
</dbReference>
<dbReference type="FunFam" id="3.10.20.310:FF:000002">
    <property type="entry name" value="Outer membrane protein assembly factor BamA"/>
    <property type="match status" value="1"/>
</dbReference>
<dbReference type="FunFam" id="3.10.20.310:FF:000003">
    <property type="entry name" value="Outer membrane protein assembly factor BamA"/>
    <property type="match status" value="1"/>
</dbReference>
<dbReference type="FunFam" id="3.10.20.310:FF:000004">
    <property type="entry name" value="Outer membrane protein assembly factor BamA"/>
    <property type="match status" value="1"/>
</dbReference>
<dbReference type="FunFam" id="3.10.20.310:FF:000005">
    <property type="entry name" value="Outer membrane protein assembly factor BamA"/>
    <property type="match status" value="1"/>
</dbReference>
<dbReference type="Gene3D" id="3.10.20.310">
    <property type="entry name" value="membrane protein fhac"/>
    <property type="match status" value="5"/>
</dbReference>
<dbReference type="Gene3D" id="2.40.160.50">
    <property type="entry name" value="membrane protein fhac: a member of the omp85/tpsb transporter family"/>
    <property type="match status" value="1"/>
</dbReference>
<dbReference type="HAMAP" id="MF_01430">
    <property type="entry name" value="OM_assembly_BamA"/>
    <property type="match status" value="1"/>
</dbReference>
<dbReference type="InterPro" id="IPR000184">
    <property type="entry name" value="Bac_surfAg_D15"/>
</dbReference>
<dbReference type="InterPro" id="IPR010827">
    <property type="entry name" value="BamA/TamA_POTRA"/>
</dbReference>
<dbReference type="InterPro" id="IPR039910">
    <property type="entry name" value="D15-like"/>
</dbReference>
<dbReference type="InterPro" id="IPR023707">
    <property type="entry name" value="OM_assembly_BamA"/>
</dbReference>
<dbReference type="InterPro" id="IPR034746">
    <property type="entry name" value="POTRA"/>
</dbReference>
<dbReference type="NCBIfam" id="TIGR03303">
    <property type="entry name" value="OM_YaeT"/>
    <property type="match status" value="1"/>
</dbReference>
<dbReference type="NCBIfam" id="NF008287">
    <property type="entry name" value="PRK11067.1"/>
    <property type="match status" value="1"/>
</dbReference>
<dbReference type="PANTHER" id="PTHR12815:SF23">
    <property type="entry name" value="OUTER MEMBRANE PROTEIN ASSEMBLY FACTOR BAMA"/>
    <property type="match status" value="1"/>
</dbReference>
<dbReference type="PANTHER" id="PTHR12815">
    <property type="entry name" value="SORTING AND ASSEMBLY MACHINERY SAMM50 PROTEIN FAMILY MEMBER"/>
    <property type="match status" value="1"/>
</dbReference>
<dbReference type="Pfam" id="PF01103">
    <property type="entry name" value="Omp85"/>
    <property type="match status" value="1"/>
</dbReference>
<dbReference type="Pfam" id="PF07244">
    <property type="entry name" value="POTRA"/>
    <property type="match status" value="4"/>
</dbReference>
<dbReference type="PIRSF" id="PIRSF006076">
    <property type="entry name" value="OM_assembly_OMP85"/>
    <property type="match status" value="1"/>
</dbReference>
<dbReference type="PROSITE" id="PS51779">
    <property type="entry name" value="POTRA"/>
    <property type="match status" value="5"/>
</dbReference>
<protein>
    <recommendedName>
        <fullName evidence="1">Outer membrane protein assembly factor BamA</fullName>
    </recommendedName>
</protein>
<accession>B1IQG4</accession>